<organism>
    <name type="scientific">Sorghum bicolor</name>
    <name type="common">Sorghum</name>
    <name type="synonym">Sorghum vulgare</name>
    <dbReference type="NCBI Taxonomy" id="4558"/>
    <lineage>
        <taxon>Eukaryota</taxon>
        <taxon>Viridiplantae</taxon>
        <taxon>Streptophyta</taxon>
        <taxon>Embryophyta</taxon>
        <taxon>Tracheophyta</taxon>
        <taxon>Spermatophyta</taxon>
        <taxon>Magnoliopsida</taxon>
        <taxon>Liliopsida</taxon>
        <taxon>Poales</taxon>
        <taxon>Poaceae</taxon>
        <taxon>PACMAD clade</taxon>
        <taxon>Panicoideae</taxon>
        <taxon>Andropogonodae</taxon>
        <taxon>Andropogoneae</taxon>
        <taxon>Sorghinae</taxon>
        <taxon>Sorghum</taxon>
    </lineage>
</organism>
<gene>
    <name type="ordered locus">Sb04g009880</name>
</gene>
<accession>C5XZK6</accession>
<feature type="chain" id="PRO_0000414270" description="U1 small nuclear ribonucleoprotein C-1">
    <location>
        <begin position="1"/>
        <end position="231"/>
    </location>
</feature>
<feature type="zinc finger region" description="Matrin-type" evidence="1">
    <location>
        <begin position="4"/>
        <end position="36"/>
    </location>
</feature>
<feature type="region of interest" description="Disordered" evidence="2">
    <location>
        <begin position="117"/>
        <end position="231"/>
    </location>
</feature>
<feature type="compositionally biased region" description="Pro residues" evidence="2">
    <location>
        <begin position="117"/>
        <end position="127"/>
    </location>
</feature>
<feature type="compositionally biased region" description="Pro residues" evidence="2">
    <location>
        <begin position="134"/>
        <end position="159"/>
    </location>
</feature>
<feature type="compositionally biased region" description="Pro residues" evidence="2">
    <location>
        <begin position="167"/>
        <end position="178"/>
    </location>
</feature>
<feature type="compositionally biased region" description="Low complexity" evidence="2">
    <location>
        <begin position="181"/>
        <end position="193"/>
    </location>
</feature>
<feature type="compositionally biased region" description="Pro residues" evidence="2">
    <location>
        <begin position="199"/>
        <end position="217"/>
    </location>
</feature>
<dbReference type="EMBL" id="CM000763">
    <property type="protein sequence ID" value="EES06628.1"/>
    <property type="molecule type" value="Genomic_DNA"/>
</dbReference>
<dbReference type="RefSeq" id="XP_002453652.1">
    <property type="nucleotide sequence ID" value="XM_002453607.1"/>
</dbReference>
<dbReference type="SMR" id="C5XZK6"/>
<dbReference type="FunCoup" id="C5XZK6">
    <property type="interactions" value="13"/>
</dbReference>
<dbReference type="STRING" id="4558.C5XZK6"/>
<dbReference type="EnsemblPlants" id="EES06628">
    <property type="protein sequence ID" value="EES06628"/>
    <property type="gene ID" value="SORBI_3004G118500"/>
</dbReference>
<dbReference type="Gramene" id="EES06628">
    <property type="protein sequence ID" value="EES06628"/>
    <property type="gene ID" value="SORBI_3004G118500"/>
</dbReference>
<dbReference type="KEGG" id="sbi:8078373"/>
<dbReference type="eggNOG" id="KOG3454">
    <property type="taxonomic scope" value="Eukaryota"/>
</dbReference>
<dbReference type="HOGENOM" id="CLU_079697_1_0_1"/>
<dbReference type="InParanoid" id="C5XZK6"/>
<dbReference type="OMA" id="GWKFREN"/>
<dbReference type="OrthoDB" id="76567at2759"/>
<dbReference type="Proteomes" id="UP000000768">
    <property type="component" value="Chromosome 4"/>
</dbReference>
<dbReference type="ExpressionAtlas" id="C5XZK6">
    <property type="expression patterns" value="baseline and differential"/>
</dbReference>
<dbReference type="GO" id="GO:0000243">
    <property type="term" value="C:commitment complex"/>
    <property type="evidence" value="ECO:0007669"/>
    <property type="project" value="UniProtKB-UniRule"/>
</dbReference>
<dbReference type="GO" id="GO:0005685">
    <property type="term" value="C:U1 snRNP"/>
    <property type="evidence" value="ECO:0000318"/>
    <property type="project" value="GO_Central"/>
</dbReference>
<dbReference type="GO" id="GO:0071004">
    <property type="term" value="C:U2-type prespliceosome"/>
    <property type="evidence" value="ECO:0007669"/>
    <property type="project" value="UniProtKB-UniRule"/>
</dbReference>
<dbReference type="GO" id="GO:0003729">
    <property type="term" value="F:mRNA binding"/>
    <property type="evidence" value="ECO:0007669"/>
    <property type="project" value="UniProtKB-UniRule"/>
</dbReference>
<dbReference type="GO" id="GO:0030627">
    <property type="term" value="F:pre-mRNA 5'-splice site binding"/>
    <property type="evidence" value="ECO:0000318"/>
    <property type="project" value="GO_Central"/>
</dbReference>
<dbReference type="GO" id="GO:0030619">
    <property type="term" value="F:U1 snRNA binding"/>
    <property type="evidence" value="ECO:0007669"/>
    <property type="project" value="UniProtKB-UniRule"/>
</dbReference>
<dbReference type="GO" id="GO:0008270">
    <property type="term" value="F:zinc ion binding"/>
    <property type="evidence" value="ECO:0007669"/>
    <property type="project" value="UniProtKB-UniRule"/>
</dbReference>
<dbReference type="GO" id="GO:0000395">
    <property type="term" value="P:mRNA 5'-splice site recognition"/>
    <property type="evidence" value="ECO:0000318"/>
    <property type="project" value="GO_Central"/>
</dbReference>
<dbReference type="GO" id="GO:0000387">
    <property type="term" value="P:spliceosomal snRNP assembly"/>
    <property type="evidence" value="ECO:0007669"/>
    <property type="project" value="UniProtKB-UniRule"/>
</dbReference>
<dbReference type="FunFam" id="3.30.160.60:FF:000059">
    <property type="entry name" value="U1 small nuclear ribonucleoprotein C"/>
    <property type="match status" value="1"/>
</dbReference>
<dbReference type="Gene3D" id="3.30.160.60">
    <property type="entry name" value="Classic Zinc Finger"/>
    <property type="match status" value="1"/>
</dbReference>
<dbReference type="HAMAP" id="MF_03153">
    <property type="entry name" value="U1_C"/>
    <property type="match status" value="1"/>
</dbReference>
<dbReference type="InterPro" id="IPR000690">
    <property type="entry name" value="Matrin/U1-C_Znf_C2H2"/>
</dbReference>
<dbReference type="InterPro" id="IPR003604">
    <property type="entry name" value="Matrin/U1-like-C_Znf_C2H2"/>
</dbReference>
<dbReference type="InterPro" id="IPR013085">
    <property type="entry name" value="U1-CZ_Znf_C2H2"/>
</dbReference>
<dbReference type="InterPro" id="IPR017340">
    <property type="entry name" value="U1_snRNP-C"/>
</dbReference>
<dbReference type="InterPro" id="IPR036236">
    <property type="entry name" value="Znf_C2H2_sf"/>
</dbReference>
<dbReference type="PANTHER" id="PTHR31148">
    <property type="entry name" value="U1 SMALL NUCLEAR RIBONUCLEOPROTEIN C"/>
    <property type="match status" value="1"/>
</dbReference>
<dbReference type="PANTHER" id="PTHR31148:SF1">
    <property type="entry name" value="U1 SMALL NUCLEAR RIBONUCLEOPROTEIN C"/>
    <property type="match status" value="1"/>
</dbReference>
<dbReference type="Pfam" id="PF06220">
    <property type="entry name" value="zf-U1"/>
    <property type="match status" value="1"/>
</dbReference>
<dbReference type="PIRSF" id="PIRSF037969">
    <property type="entry name" value="U1_snRNP-C"/>
    <property type="match status" value="1"/>
</dbReference>
<dbReference type="SMART" id="SM00451">
    <property type="entry name" value="ZnF_U1"/>
    <property type="match status" value="1"/>
</dbReference>
<dbReference type="SUPFAM" id="SSF57667">
    <property type="entry name" value="beta-beta-alpha zinc fingers"/>
    <property type="match status" value="1"/>
</dbReference>
<dbReference type="PROSITE" id="PS50171">
    <property type="entry name" value="ZF_MATRIN"/>
    <property type="match status" value="1"/>
</dbReference>
<proteinExistence type="inferred from homology"/>
<comment type="function">
    <text evidence="1">Component of the spliceosomal U1 snRNP, which is essential for recognition of the pre-mRNA 5' splice-site and the subsequent assembly of the spliceosome. U1-C is directly involved in initial 5' splice-site recognition for both constitutive and regulated alternative splicing. The interaction with the 5' splice-site seems to precede base-pairing between the pre-mRNA and the U1 snRNA. Stimulates commitment or early (E) complex formation by stabilizing the base pairing of the 5' end of the U1 snRNA and the 5' splice-site region.</text>
</comment>
<comment type="subunit">
    <text evidence="1">U1 snRNP is composed of the 7 core Sm proteins B/B', D1, D2, D3, E, F and G that assemble in a heptameric protein ring on the Sm site of the small nuclear RNA to form the core snRNP, and at least 3 U1 snRNP-specific proteins U1-70K, U1-A and U1-C. U1-C interacts with U1 snRNA and the 5' splice-site region of the pre-mRNA.</text>
</comment>
<comment type="subcellular location">
    <subcellularLocation>
        <location evidence="1">Nucleus</location>
    </subcellularLocation>
</comment>
<comment type="similarity">
    <text evidence="1">Belongs to the U1 small nuclear ribonucleoprotein C family.</text>
</comment>
<sequence>MPRYYCDYCDTYLTHDSPSVRKQHNAGYKHKANVRTYYQQFEEQQTQSLIDQRIKEHLGQAAAFQAGAPFNQHMLTFPGAVARPRLPILPTPGMPHGFPQAPGAPLMPGVRPPILPAPGIPGYPGGPPTMLQPGAPPGSMPQPGAPPGSMPQPGAPPGSMPMQMAPLPRPPTLPPPTSGVPGAPIPNSAAPPAIYQTNPPAPAGPTSGAPPAPPTAPQPAFSYAQPSEGNH</sequence>
<reference key="1">
    <citation type="journal article" date="2009" name="Nature">
        <title>The Sorghum bicolor genome and the diversification of grasses.</title>
        <authorList>
            <person name="Paterson A.H."/>
            <person name="Bowers J.E."/>
            <person name="Bruggmann R."/>
            <person name="Dubchak I."/>
            <person name="Grimwood J."/>
            <person name="Gundlach H."/>
            <person name="Haberer G."/>
            <person name="Hellsten U."/>
            <person name="Mitros T."/>
            <person name="Poliakov A."/>
            <person name="Schmutz J."/>
            <person name="Spannagl M."/>
            <person name="Tang H."/>
            <person name="Wang X."/>
            <person name="Wicker T."/>
            <person name="Bharti A.K."/>
            <person name="Chapman J."/>
            <person name="Feltus F.A."/>
            <person name="Gowik U."/>
            <person name="Grigoriev I.V."/>
            <person name="Lyons E."/>
            <person name="Maher C.A."/>
            <person name="Martis M."/>
            <person name="Narechania A."/>
            <person name="Otillar R.P."/>
            <person name="Penning B.W."/>
            <person name="Salamov A.A."/>
            <person name="Wang Y."/>
            <person name="Zhang L."/>
            <person name="Carpita N.C."/>
            <person name="Freeling M."/>
            <person name="Gingle A.R."/>
            <person name="Hash C.T."/>
            <person name="Keller B."/>
            <person name="Klein P."/>
            <person name="Kresovich S."/>
            <person name="McCann M.C."/>
            <person name="Ming R."/>
            <person name="Peterson D.G."/>
            <person name="Mehboob-ur-Rahman M."/>
            <person name="Ware D."/>
            <person name="Westhoff P."/>
            <person name="Mayer K.F.X."/>
            <person name="Messing J."/>
            <person name="Rokhsar D.S."/>
        </authorList>
    </citation>
    <scope>NUCLEOTIDE SEQUENCE [LARGE SCALE GENOMIC DNA]</scope>
    <source>
        <strain>cv. BTx623</strain>
    </source>
</reference>
<reference key="2">
    <citation type="journal article" date="2018" name="Plant J.">
        <title>The Sorghum bicolor reference genome: improved assembly, gene annotations, a transcriptome atlas, and signatures of genome organization.</title>
        <authorList>
            <person name="McCormick R.F."/>
            <person name="Truong S.K."/>
            <person name="Sreedasyam A."/>
            <person name="Jenkins J."/>
            <person name="Shu S."/>
            <person name="Sims D."/>
            <person name="Kennedy M."/>
            <person name="Amirebrahimi M."/>
            <person name="Weers B.D."/>
            <person name="McKinley B."/>
            <person name="Mattison A."/>
            <person name="Morishige D.T."/>
            <person name="Grimwood J."/>
            <person name="Schmutz J."/>
            <person name="Mullet J.E."/>
        </authorList>
    </citation>
    <scope>GENOME REANNOTATION</scope>
    <source>
        <strain>cv. BTx623</strain>
    </source>
</reference>
<name>RU1C1_SORBI</name>
<keyword id="KW-0479">Metal-binding</keyword>
<keyword id="KW-0539">Nucleus</keyword>
<keyword id="KW-1185">Reference proteome</keyword>
<keyword id="KW-0687">Ribonucleoprotein</keyword>
<keyword id="KW-0694">RNA-binding</keyword>
<keyword id="KW-0862">Zinc</keyword>
<keyword id="KW-0863">Zinc-finger</keyword>
<protein>
    <recommendedName>
        <fullName evidence="1">U1 small nuclear ribonucleoprotein C-1</fullName>
        <shortName evidence="1">U1 snRNP C-1</shortName>
        <shortName evidence="1">U1-C-1</shortName>
        <shortName evidence="1">U1C-1</shortName>
    </recommendedName>
</protein>
<evidence type="ECO:0000255" key="1">
    <source>
        <dbReference type="HAMAP-Rule" id="MF_03153"/>
    </source>
</evidence>
<evidence type="ECO:0000256" key="2">
    <source>
        <dbReference type="SAM" id="MobiDB-lite"/>
    </source>
</evidence>